<proteinExistence type="evidence at transcript level"/>
<name>PTP1_DICDI</name>
<feature type="chain" id="PRO_0000094886" description="Tyrosine-protein phosphatase 1">
    <location>
        <begin position="1"/>
        <end position="522"/>
    </location>
</feature>
<feature type="domain" description="Tyrosine-protein phosphatase" evidence="1">
    <location>
        <begin position="97"/>
        <end position="471"/>
    </location>
</feature>
<feature type="region of interest" description="Disordered" evidence="3">
    <location>
        <begin position="32"/>
        <end position="63"/>
    </location>
</feature>
<feature type="region of interest" description="PTPase insert (Asn-rich)">
    <location>
        <begin position="327"/>
        <end position="426"/>
    </location>
</feature>
<feature type="region of interest" description="Disordered" evidence="3">
    <location>
        <begin position="382"/>
        <end position="420"/>
    </location>
</feature>
<feature type="compositionally biased region" description="Low complexity" evidence="3">
    <location>
        <begin position="33"/>
        <end position="63"/>
    </location>
</feature>
<feature type="compositionally biased region" description="Low complexity" evidence="3">
    <location>
        <begin position="382"/>
        <end position="410"/>
    </location>
</feature>
<feature type="compositionally biased region" description="Acidic residues" evidence="3">
    <location>
        <begin position="411"/>
        <end position="420"/>
    </location>
</feature>
<feature type="active site" description="Phosphocysteine intermediate" evidence="1 2">
    <location>
        <position position="310"/>
    </location>
</feature>
<feature type="sequence conflict" description="In Ref. 1; AAA33241." evidence="4" ref="1">
    <original>DL</original>
    <variation>T</variation>
    <location>
        <begin position="423"/>
        <end position="424"/>
    </location>
</feature>
<reference key="1">
    <citation type="journal article" date="1992" name="Cell">
        <title>Analysis of a spatially regulated phosphotyrosine phosphatase identifies tyrosine phosphorylation as a key regulatory pathway in Dictyostelium.</title>
        <authorList>
            <person name="Howard P.K."/>
            <person name="Sefton B.M."/>
            <person name="Firtel R.A."/>
        </authorList>
    </citation>
    <scope>NUCLEOTIDE SEQUENCE [GENOMIC DNA]</scope>
</reference>
<reference key="2">
    <citation type="journal article" date="2002" name="Nature">
        <title>Sequence and analysis of chromosome 2 of Dictyostelium discoideum.</title>
        <authorList>
            <person name="Gloeckner G."/>
            <person name="Eichinger L."/>
            <person name="Szafranski K."/>
            <person name="Pachebat J.A."/>
            <person name="Bankier A.T."/>
            <person name="Dear P.H."/>
            <person name="Lehmann R."/>
            <person name="Baumgart C."/>
            <person name="Parra G."/>
            <person name="Abril J.F."/>
            <person name="Guigo R."/>
            <person name="Kumpf K."/>
            <person name="Tunggal B."/>
            <person name="Cox E.C."/>
            <person name="Quail M.A."/>
            <person name="Platzer M."/>
            <person name="Rosenthal A."/>
            <person name="Noegel A.A."/>
        </authorList>
    </citation>
    <scope>NUCLEOTIDE SEQUENCE [LARGE SCALE GENOMIC DNA]</scope>
    <source>
        <strain>AX4</strain>
    </source>
</reference>
<reference key="3">
    <citation type="journal article" date="2005" name="Nature">
        <title>The genome of the social amoeba Dictyostelium discoideum.</title>
        <authorList>
            <person name="Eichinger L."/>
            <person name="Pachebat J.A."/>
            <person name="Gloeckner G."/>
            <person name="Rajandream M.A."/>
            <person name="Sucgang R."/>
            <person name="Berriman M."/>
            <person name="Song J."/>
            <person name="Olsen R."/>
            <person name="Szafranski K."/>
            <person name="Xu Q."/>
            <person name="Tunggal B."/>
            <person name="Kummerfeld S."/>
            <person name="Madera M."/>
            <person name="Konfortov B.A."/>
            <person name="Rivero F."/>
            <person name="Bankier A.T."/>
            <person name="Lehmann R."/>
            <person name="Hamlin N."/>
            <person name="Davies R."/>
            <person name="Gaudet P."/>
            <person name="Fey P."/>
            <person name="Pilcher K."/>
            <person name="Chen G."/>
            <person name="Saunders D."/>
            <person name="Sodergren E.J."/>
            <person name="Davis P."/>
            <person name="Kerhornou A."/>
            <person name="Nie X."/>
            <person name="Hall N."/>
            <person name="Anjard C."/>
            <person name="Hemphill L."/>
            <person name="Bason N."/>
            <person name="Farbrother P."/>
            <person name="Desany B."/>
            <person name="Just E."/>
            <person name="Morio T."/>
            <person name="Rost R."/>
            <person name="Churcher C.M."/>
            <person name="Cooper J."/>
            <person name="Haydock S."/>
            <person name="van Driessche N."/>
            <person name="Cronin A."/>
            <person name="Goodhead I."/>
            <person name="Muzny D.M."/>
            <person name="Mourier T."/>
            <person name="Pain A."/>
            <person name="Lu M."/>
            <person name="Harper D."/>
            <person name="Lindsay R."/>
            <person name="Hauser H."/>
            <person name="James K.D."/>
            <person name="Quiles M."/>
            <person name="Madan Babu M."/>
            <person name="Saito T."/>
            <person name="Buchrieser C."/>
            <person name="Wardroper A."/>
            <person name="Felder M."/>
            <person name="Thangavelu M."/>
            <person name="Johnson D."/>
            <person name="Knights A."/>
            <person name="Loulseged H."/>
            <person name="Mungall K.L."/>
            <person name="Oliver K."/>
            <person name="Price C."/>
            <person name="Quail M.A."/>
            <person name="Urushihara H."/>
            <person name="Hernandez J."/>
            <person name="Rabbinowitsch E."/>
            <person name="Steffen D."/>
            <person name="Sanders M."/>
            <person name="Ma J."/>
            <person name="Kohara Y."/>
            <person name="Sharp S."/>
            <person name="Simmonds M.N."/>
            <person name="Spiegler S."/>
            <person name="Tivey A."/>
            <person name="Sugano S."/>
            <person name="White B."/>
            <person name="Walker D."/>
            <person name="Woodward J.R."/>
            <person name="Winckler T."/>
            <person name="Tanaka Y."/>
            <person name="Shaulsky G."/>
            <person name="Schleicher M."/>
            <person name="Weinstock G.M."/>
            <person name="Rosenthal A."/>
            <person name="Cox E.C."/>
            <person name="Chisholm R.L."/>
            <person name="Gibbs R.A."/>
            <person name="Loomis W.F."/>
            <person name="Platzer M."/>
            <person name="Kay R.R."/>
            <person name="Williams J.G."/>
            <person name="Dear P.H."/>
            <person name="Noegel A.A."/>
            <person name="Barrell B.G."/>
            <person name="Kuspa A."/>
        </authorList>
    </citation>
    <scope>NUCLEOTIDE SEQUENCE [LARGE SCALE GENOMIC DNA]</scope>
    <source>
        <strain>AX4</strain>
    </source>
</reference>
<sequence>MGSVESSNQMNGSIENKTNKIDISVLRPLPTRSNSSISLSSSSHSSFSRMGSLGSLPTNSGSSSPYYNNSSFDLVDEERIKSSIYNLKNHIKCIHKIKEEFRLLEESVGPSETSEGDKKHNTSKNRYTNILPVNHTRVQLKKIQDKEGSDYINANYIDGAYPKQFICTQGPLPNTIADFWRMVWENRCRIIVMLSRESENCRIKCDRYWPEQIGGEQFSIYGNGNEVFGTYSVELVEVIQDPEREIITRNIRLTFEGETRDITQYQYEGWPDHNIPDHTQPFRQLLHSITNRQNQIIPSSDRNVPIIVHCSAGVGRTGTFCTAVIMMKKLDHYFKQLDATPIDQVVDPFTHLPITEYQSDNLDLKGLGYHFKSSIYNSNGINNNNNNNLNNNNNINNNSNGSNNTPQTEPNNEEDDDDAAESDLKYAIMDKYNSRIDFNLFSIVLKLREQRPGMVQQLEQYLFCYKTILDEIYHRLNCKLGFSLPHVNNINNYNNYSNTTTTTTSSLASTTIIHPSTNSKLN</sequence>
<evidence type="ECO:0000255" key="1">
    <source>
        <dbReference type="PROSITE-ProRule" id="PRU00160"/>
    </source>
</evidence>
<evidence type="ECO:0000255" key="2">
    <source>
        <dbReference type="PROSITE-ProRule" id="PRU10044"/>
    </source>
</evidence>
<evidence type="ECO:0000256" key="3">
    <source>
        <dbReference type="SAM" id="MobiDB-lite"/>
    </source>
</evidence>
<evidence type="ECO:0000305" key="4"/>
<dbReference type="EC" id="3.1.3.48"/>
<dbReference type="EMBL" id="L07125">
    <property type="protein sequence ID" value="AAA33241.1"/>
    <property type="molecule type" value="Genomic_DNA"/>
</dbReference>
<dbReference type="EMBL" id="AAFI02000011">
    <property type="protein sequence ID" value="EAL70599.1"/>
    <property type="molecule type" value="Genomic_DNA"/>
</dbReference>
<dbReference type="EMBL" id="AAFI02000009">
    <property type="protein sequence ID" value="EAL70766.1"/>
    <property type="molecule type" value="Genomic_DNA"/>
</dbReference>
<dbReference type="PIR" id="A44267">
    <property type="entry name" value="A44267"/>
</dbReference>
<dbReference type="RefSeq" id="XP_644525.1">
    <property type="nucleotide sequence ID" value="XM_639433.1"/>
</dbReference>
<dbReference type="RefSeq" id="XP_644725.1">
    <property type="nucleotide sequence ID" value="XM_639633.1"/>
</dbReference>
<dbReference type="SMR" id="P34137"/>
<dbReference type="STRING" id="44689.P34137"/>
<dbReference type="PaxDb" id="44689-DDB0185117"/>
<dbReference type="EnsemblProtists" id="EAL70599">
    <property type="protein sequence ID" value="EAL70599"/>
    <property type="gene ID" value="DDB_G0273817"/>
</dbReference>
<dbReference type="EnsemblProtists" id="EAL70766">
    <property type="protein sequence ID" value="EAL70766"/>
    <property type="gene ID" value="DDB_G0273097"/>
</dbReference>
<dbReference type="GeneID" id="8618825"/>
<dbReference type="GeneID" id="8619151"/>
<dbReference type="KEGG" id="ddi:DDB_G0273097"/>
<dbReference type="KEGG" id="ddi:DDB_G0273817"/>
<dbReference type="dictyBase" id="DDB_G0273097">
    <property type="gene designation" value="ptpA1-1"/>
</dbReference>
<dbReference type="dictyBase" id="DDB_G0273817">
    <property type="gene designation" value="ptpA1-2"/>
</dbReference>
<dbReference type="VEuPathDB" id="AmoebaDB:DDB_G0273817"/>
<dbReference type="eggNOG" id="KOG4228">
    <property type="taxonomic scope" value="Eukaryota"/>
</dbReference>
<dbReference type="HOGENOM" id="CLU_522186_0_0_1"/>
<dbReference type="InParanoid" id="P34137"/>
<dbReference type="OMA" id="ENCRIKC"/>
<dbReference type="PhylomeDB" id="P34137"/>
<dbReference type="Reactome" id="R-DDI-5675221">
    <property type="pathway name" value="Negative regulation of MAPK pathway"/>
</dbReference>
<dbReference type="Reactome" id="R-DDI-6798695">
    <property type="pathway name" value="Neutrophil degranulation"/>
</dbReference>
<dbReference type="PRO" id="PR:P34137"/>
<dbReference type="Proteomes" id="UP000002195">
    <property type="component" value="Chromosome 2"/>
</dbReference>
<dbReference type="GO" id="GO:0005737">
    <property type="term" value="C:cytoplasm"/>
    <property type="evidence" value="ECO:0007669"/>
    <property type="project" value="UniProtKB-SubCell"/>
</dbReference>
<dbReference type="GO" id="GO:0005886">
    <property type="term" value="C:plasma membrane"/>
    <property type="evidence" value="ECO:0007669"/>
    <property type="project" value="UniProtKB-SubCell"/>
</dbReference>
<dbReference type="GO" id="GO:0016791">
    <property type="term" value="F:phosphatase activity"/>
    <property type="evidence" value="ECO:0000314"/>
    <property type="project" value="dictyBase"/>
</dbReference>
<dbReference type="GO" id="GO:0004725">
    <property type="term" value="F:protein tyrosine phosphatase activity"/>
    <property type="evidence" value="ECO:0007669"/>
    <property type="project" value="UniProtKB-EC"/>
</dbReference>
<dbReference type="GO" id="GO:0031156">
    <property type="term" value="P:regulation of sorocarp development"/>
    <property type="evidence" value="ECO:0000315"/>
    <property type="project" value="dictyBase"/>
</dbReference>
<dbReference type="CDD" id="cd00047">
    <property type="entry name" value="PTPc"/>
    <property type="match status" value="1"/>
</dbReference>
<dbReference type="Gene3D" id="3.90.190.10">
    <property type="entry name" value="Protein tyrosine phosphatase superfamily"/>
    <property type="match status" value="1"/>
</dbReference>
<dbReference type="InterPro" id="IPR029021">
    <property type="entry name" value="Prot-tyrosine_phosphatase-like"/>
</dbReference>
<dbReference type="InterPro" id="IPR050348">
    <property type="entry name" value="Protein-Tyr_Phosphatase"/>
</dbReference>
<dbReference type="InterPro" id="IPR000242">
    <property type="entry name" value="PTP_cat"/>
</dbReference>
<dbReference type="InterPro" id="IPR016130">
    <property type="entry name" value="Tyr_Pase_AS"/>
</dbReference>
<dbReference type="InterPro" id="IPR003595">
    <property type="entry name" value="Tyr_Pase_cat"/>
</dbReference>
<dbReference type="InterPro" id="IPR000387">
    <property type="entry name" value="Tyr_Pase_dom"/>
</dbReference>
<dbReference type="PANTHER" id="PTHR19134">
    <property type="entry name" value="RECEPTOR-TYPE TYROSINE-PROTEIN PHOSPHATASE"/>
    <property type="match status" value="1"/>
</dbReference>
<dbReference type="PANTHER" id="PTHR19134:SF449">
    <property type="entry name" value="TYROSINE-PROTEIN PHOSPHATASE 1"/>
    <property type="match status" value="1"/>
</dbReference>
<dbReference type="Pfam" id="PF00102">
    <property type="entry name" value="Y_phosphatase"/>
    <property type="match status" value="2"/>
</dbReference>
<dbReference type="PRINTS" id="PR00700">
    <property type="entry name" value="PRTYPHPHTASE"/>
</dbReference>
<dbReference type="SMART" id="SM00194">
    <property type="entry name" value="PTPc"/>
    <property type="match status" value="1"/>
</dbReference>
<dbReference type="SMART" id="SM00404">
    <property type="entry name" value="PTPc_motif"/>
    <property type="match status" value="1"/>
</dbReference>
<dbReference type="SUPFAM" id="SSF52799">
    <property type="entry name" value="(Phosphotyrosine protein) phosphatases II"/>
    <property type="match status" value="1"/>
</dbReference>
<dbReference type="PROSITE" id="PS00383">
    <property type="entry name" value="TYR_PHOSPHATASE_1"/>
    <property type="match status" value="1"/>
</dbReference>
<dbReference type="PROSITE" id="PS50056">
    <property type="entry name" value="TYR_PHOSPHATASE_2"/>
    <property type="match status" value="1"/>
</dbReference>
<dbReference type="PROSITE" id="PS50055">
    <property type="entry name" value="TYR_PHOSPHATASE_PTP"/>
    <property type="match status" value="1"/>
</dbReference>
<comment type="function">
    <text>May have a role in growth and in the early stages of development. Affects the timing of development.</text>
</comment>
<comment type="catalytic activity">
    <reaction evidence="2">
        <text>O-phospho-L-tyrosyl-[protein] + H2O = L-tyrosyl-[protein] + phosphate</text>
        <dbReference type="Rhea" id="RHEA:10684"/>
        <dbReference type="Rhea" id="RHEA-COMP:10136"/>
        <dbReference type="Rhea" id="RHEA-COMP:20101"/>
        <dbReference type="ChEBI" id="CHEBI:15377"/>
        <dbReference type="ChEBI" id="CHEBI:43474"/>
        <dbReference type="ChEBI" id="CHEBI:46858"/>
        <dbReference type="ChEBI" id="CHEBI:61978"/>
        <dbReference type="EC" id="3.1.3.48"/>
    </reaction>
</comment>
<comment type="subcellular location">
    <subcellularLocation>
        <location>Cytoplasm</location>
    </subcellularLocation>
    <subcellularLocation>
        <location evidence="4">Cell membrane</location>
    </subcellularLocation>
    <text>Might be tethered to the plasma membrane.</text>
</comment>
<comment type="tissue specificity">
    <text>Expressed predominantly in anterior-like cells and to a lesser degree in prestalk cells.</text>
</comment>
<comment type="developmental stage">
    <text>Expressed at a very low level in vegetative cells, induced by 4 hours, maximally expressed at the tight aggregate stage and through the remainder of development.</text>
</comment>
<comment type="miscellaneous">
    <text>The PTPase domain is interrupted by a PTPase insert which shares no homologies with other PTPase proteins.</text>
</comment>
<comment type="similarity">
    <text evidence="4">Belongs to the protein-tyrosine phosphatase family. Non-receptor class subfamily.</text>
</comment>
<comment type="caution">
    <text evidence="4">The gene for this protein is duplicated in strains AX3 and AX4. These strains contain a duplication of a segment of 750 kb of chromosome 2 compared to the corresponding sequence in strain AX2.</text>
</comment>
<accession>P34137</accession>
<accession>Q556U4</accession>
<accession>Q86AJ9</accession>
<protein>
    <recommendedName>
        <fullName>Tyrosine-protein phosphatase 1</fullName>
        <ecNumber>3.1.3.48</ecNumber>
    </recommendedName>
    <alternativeName>
        <fullName>Protein-tyrosine-phosphate phosphohydrolase 1</fullName>
    </alternativeName>
</protein>
<keyword id="KW-1003">Cell membrane</keyword>
<keyword id="KW-0963">Cytoplasm</keyword>
<keyword id="KW-0378">Hydrolase</keyword>
<keyword id="KW-0472">Membrane</keyword>
<keyword id="KW-0904">Protein phosphatase</keyword>
<keyword id="KW-1185">Reference proteome</keyword>
<organism>
    <name type="scientific">Dictyostelium discoideum</name>
    <name type="common">Social amoeba</name>
    <dbReference type="NCBI Taxonomy" id="44689"/>
    <lineage>
        <taxon>Eukaryota</taxon>
        <taxon>Amoebozoa</taxon>
        <taxon>Evosea</taxon>
        <taxon>Eumycetozoa</taxon>
        <taxon>Dictyostelia</taxon>
        <taxon>Dictyosteliales</taxon>
        <taxon>Dictyosteliaceae</taxon>
        <taxon>Dictyostelium</taxon>
    </lineage>
</organism>
<gene>
    <name type="primary">ptpA1-1</name>
    <name type="synonym">ptp1</name>
    <name type="ORF">DDB_G0273097</name>
</gene>
<gene>
    <name type="primary">ptpA1-2</name>
    <name type="synonym">ptp1</name>
    <name type="ORF">DDB_G0273817</name>
</gene>